<gene>
    <name evidence="5" type="primary">ledMA</name>
    <name type="ORF">LENED_011197</name>
</gene>
<feature type="chain" id="PRO_0000458499" description="N-methyltranferase ledM" evidence="7">
    <location>
        <begin position="1"/>
        <end position="399"/>
    </location>
</feature>
<feature type="peptide" id="PRO_0000458500" description="Ribosomally synthesized lentinulin A core peptide" evidence="7">
    <location>
        <begin position="400"/>
        <end position="411"/>
    </location>
</feature>
<feature type="peptide" id="PRO_0000458501" description="Follower peptide" evidence="1">
    <location>
        <begin position="412"/>
        <end position="417"/>
    </location>
</feature>
<feature type="region of interest" description="Methyltransferase domain" evidence="1">
    <location>
        <begin position="1"/>
        <end position="251"/>
    </location>
</feature>
<feature type="region of interest" description="Clasp domain" evidence="1">
    <location>
        <begin position="252"/>
        <end position="378"/>
    </location>
</feature>
<feature type="region of interest" description="Precursor leader" evidence="1">
    <location>
        <begin position="379"/>
        <end position="399"/>
    </location>
</feature>
<feature type="active site" evidence="1">
    <location>
        <position position="72"/>
    </location>
</feature>
<feature type="active site" evidence="1">
    <location>
        <position position="76"/>
    </location>
</feature>
<feature type="active site" evidence="1">
    <location>
        <position position="98"/>
    </location>
</feature>
<feature type="binding site" evidence="1">
    <location>
        <position position="98"/>
    </location>
    <ligand>
        <name>S-adenosyl-L-methionine</name>
        <dbReference type="ChEBI" id="CHEBI:59789"/>
    </ligand>
</feature>
<feature type="binding site" evidence="1">
    <location>
        <position position="100"/>
    </location>
    <ligand>
        <name>S-adenosyl-L-methionine</name>
        <dbReference type="ChEBI" id="CHEBI:59789"/>
    </ligand>
</feature>
<feature type="binding site" evidence="1">
    <location>
        <position position="103"/>
    </location>
    <ligand>
        <name>S-adenosyl-L-methionine</name>
        <dbReference type="ChEBI" id="CHEBI:59789"/>
    </ligand>
</feature>
<feature type="binding site" evidence="1">
    <location>
        <position position="130"/>
    </location>
    <ligand>
        <name>S-adenosyl-L-methionine</name>
        <dbReference type="ChEBI" id="CHEBI:59789"/>
    </ligand>
</feature>
<feature type="binding site" evidence="1">
    <location>
        <position position="172"/>
    </location>
    <ligand>
        <name>S-adenosyl-L-methionine</name>
        <dbReference type="ChEBI" id="CHEBI:59789"/>
    </ligand>
</feature>
<feature type="binding site" evidence="1">
    <location>
        <position position="213"/>
    </location>
    <ligand>
        <name>S-adenosyl-L-methionine</name>
        <dbReference type="ChEBI" id="CHEBI:59789"/>
    </ligand>
</feature>
<feature type="binding site" evidence="1">
    <location>
        <position position="244"/>
    </location>
    <ligand>
        <name>S-adenosyl-L-methionine</name>
        <dbReference type="ChEBI" id="CHEBI:59789"/>
    </ligand>
</feature>
<feature type="binding site" evidence="1">
    <location>
        <position position="245"/>
    </location>
    <ligand>
        <name>S-adenosyl-L-methionine</name>
        <dbReference type="ChEBI" id="CHEBI:59789"/>
    </ligand>
</feature>
<feature type="modified residue" description="N-methylisoleucine" evidence="3">
    <location>
        <position position="401"/>
    </location>
</feature>
<feature type="modified residue" description="N-methylvaline" evidence="3">
    <location>
        <position position="403"/>
    </location>
</feature>
<feature type="modified residue" description="N-methylvaline" evidence="3">
    <location>
        <position position="404"/>
    </location>
</feature>
<feature type="modified residue" description="N-methylglycine" evidence="3">
    <location>
        <position position="405"/>
    </location>
</feature>
<feature type="modified residue" description="N-methylvaline" evidence="3">
    <location>
        <position position="406"/>
    </location>
</feature>
<feature type="modified residue" description="N-methylvaline" evidence="3">
    <location>
        <position position="407"/>
    </location>
</feature>
<feature type="modified residue" description="N-methylglycine" evidence="3">
    <location>
        <position position="408"/>
    </location>
</feature>
<feature type="modified residue" description="N-methylvaline" evidence="3">
    <location>
        <position position="410"/>
    </location>
</feature>
<feature type="modified residue" description="N-methylglycine" evidence="3">
    <location>
        <position position="411"/>
    </location>
</feature>
<feature type="modified residue" description="N-methylvaline" evidence="3">
    <location>
        <position position="413"/>
    </location>
</feature>
<comment type="function">
    <text evidence="2 3">Fusion protein of the methyltransferase ledM and the lentinulin A core peptide; part of the gene cluster that mediates the biosynthesis of lentinulin A, a highly methylated cyclic dodecapeptide with nematodicidal activity (PubMed:31117659, PubMed:33574430). Lentinulin A derives from the C-terminus of the ledMA protein, and it is the ledMA protein that methylates its own C-terminus using S-adenosyl methionine (SAM) (PubMed:31117659, PubMed:33574430). The C-terminus is subsequently cleaved off and macrocyclized by the prolyloligopeptidase ledP to give the final product (PubMed:33574430).</text>
</comment>
<comment type="pathway">
    <text evidence="3">Mycotoxin biosynthesis.</text>
</comment>
<comment type="subunit">
    <text evidence="2">Homodimer.</text>
</comment>
<comment type="domain">
    <text evidence="7">Within the homodimer, the clasp domain wraps around the adjacent subunit to position the core peptide into the other subunit's active site for iterative intermolecular methylation.</text>
</comment>
<comment type="PTM">
    <text evidence="2 3 6">LedMA automethylates at Ile-401, Val-403, Val-404, Gly-405, Val-406, Val-407, Gly-408, Val-410, Gly-411 and Val-413 before being processed by the prolyloligopeptidase ledP which likely forms a peptidyl ester upon removal of the follower propeptide, which then undergoes macrocyclization with the N-terminus of the modified core peptide (PubMed:31117659, PubMed:33574430). Peptide backbone alpha-N-methylations change the physicochemical properties of amide bonds to provide structural constraints and other favorable characteristics including biological membrane permeability to peptides (Probable).</text>
</comment>
<comment type="biotechnology">
    <text evidence="3">Lentinulin A displays strong and selective activity against the plant-pathogenic nematode Meloidogyne incognita but shows no further phytotoxic, antibacterial, or antifungal activities.</text>
</comment>
<comment type="similarity">
    <text evidence="6">In the N-terminal section; belongs to the precorrin methyltransferase family.</text>
</comment>
<sequence>METPTLNKSGSLTIVGTGIESIGQMTLQTLSYIEAADKVFYCVIDPATEAFILTKNKDCVDLYQYYDNGKSRMDTYTQMSEVMLREVRKGLDVVGVFYGHPGVFVNPSLRALAIAKSEGFKARMLPGVSAEDCLYADLCIDPSNPGCLTYEASDFLIRERPTNIYSHFILFQVGCVGIADFNFTGFENSKFGILVDRLEKEYGAEHPVVHYIAAMLPHEDPVTDQWTIGQLREPEFYKRVGGVSTFYIPPKERKEINVDIIRELKFLPEGKVPDTRTQIYPPNQWEPEVPTVPAYGSNEHAAIAQLDTHTPPEQYQPLATSKAMTDVMTKLALDPKALAEYKADHRAFAQSVPDLTANERTALEIGDSWAFRCAMKEMPISLLDNAKQSMEEASEQGFPWIIVVGVVGVVGSVVSSA</sequence>
<protein>
    <recommendedName>
        <fullName evidence="5">Methyltransferase/ribosomally synthesized cyclic peptide lentinulin A precursor ledMA</fullName>
    </recommendedName>
    <alternativeName>
        <fullName evidence="5">Lentinulin A biosynthesis cluster protein MA</fullName>
    </alternativeName>
    <alternativeName>
        <fullName evidence="4">Type I borosin cyclic peptide biosynthesis cluster protein ledMA</fullName>
    </alternativeName>
    <component>
        <recommendedName>
            <fullName evidence="5">N-methyltranferase ledM</fullName>
            <ecNumber evidence="2 3">2.1.1.-</ecNumber>
        </recommendedName>
    </component>
    <component>
        <recommendedName>
            <fullName evidence="5">Ribosomally synthesized lentinulin A core peptide</fullName>
        </recommendedName>
    </component>
    <component>
        <recommendedName>
            <fullName evidence="1">Follower peptide</fullName>
        </recommendedName>
    </component>
</protein>
<keyword id="KW-0488">Methylation</keyword>
<keyword id="KW-0489">Methyltransferase</keyword>
<keyword id="KW-1185">Reference proteome</keyword>
<keyword id="KW-0949">S-adenosyl-L-methionine</keyword>
<keyword id="KW-0808">Transferase</keyword>
<keyword id="KW-0843">Virulence</keyword>
<name>LEDMA_LENED</name>
<reference key="1">
    <citation type="journal article" date="2017" name="Appl. Environ. Microbiol.">
        <title>Lentinula edodes genome survey and postharvest transcriptome analysis.</title>
        <authorList>
            <person name="Sakamoto Y."/>
            <person name="Nakade K."/>
            <person name="Sato S."/>
            <person name="Yoshida K."/>
            <person name="Miyazaki K."/>
            <person name="Natsume S."/>
            <person name="Konno N."/>
        </authorList>
    </citation>
    <scope>NUCLEOTIDE SEQUENCE [LARGE SCALE GENOMIC DNA]</scope>
    <source>
        <strain>NBRC 111202</strain>
    </source>
</reference>
<reference key="2">
    <citation type="journal article" date="2019" name="J. Am. Chem. Soc.">
        <title>Distinct autocatalytic alpha-N-methylating precursors expand the borosin RiPP family of peptide natural products.</title>
        <authorList>
            <person name="Quijano M.R."/>
            <person name="Zach C."/>
            <person name="Miller F.S."/>
            <person name="Lee A.R."/>
            <person name="Imani A.S."/>
            <person name="Kuenzler M."/>
            <person name="Freeman M.F."/>
        </authorList>
    </citation>
    <scope>FUNCTION</scope>
    <scope>SUBUNIT</scope>
    <scope>CATALYTIC ACTIVITY</scope>
    <scope>DOMAIN</scope>
    <scope>METHYLATION AT ILE-401; VAL-403; VAL-404; GLY-405; VAL-406; VAL-407; GLY-408; VAL-410; GLY-411 AND VAL-413</scope>
</reference>
<reference key="3">
    <citation type="journal article" date="2021" name="Sci. Rep.">
        <title>Identification, heterologous production and bioactivity of lentinulin A and dendrothelin A, two natural variants of backbone N-methylated peptide macrocycle omphalotin A.</title>
        <authorList>
            <person name="Matabaro E."/>
            <person name="Kaspar H."/>
            <person name="Dahlin P."/>
            <person name="Bader D.L.V."/>
            <person name="Murar C.E."/>
            <person name="Staubli F."/>
            <person name="Field C.M."/>
            <person name="Bode J.W."/>
            <person name="Kuenzler M."/>
        </authorList>
    </citation>
    <scope>FUNCTION</scope>
    <scope>CATALYTIC ACTIVITY</scope>
    <scope>METHYLATION AT ILE-401; VAL-403; VAL-404; GLY-405; VAL-406; VAL-407; GLY-408; VAL-410; GLY-411 AND VAL-413</scope>
    <scope>PATHWAY</scope>
    <scope>BIOTECHNOLOGY</scope>
</reference>
<reference key="4">
    <citation type="journal article" date="2022" name="Sci. Rep.">
        <title>Author Correction: Identification, heterologous production and bioactivity of lentinulin A and dendrothelin A, two natural variants of backbone N-methylated peptide macrocycle omphalotin A.</title>
        <authorList>
            <person name="Matabaro E."/>
            <person name="Kaspar H."/>
            <person name="Dahlin P."/>
            <person name="Bader D.L.V."/>
            <person name="Murar C.E."/>
            <person name="Staubli F."/>
            <person name="Field C.M."/>
            <person name="Bode J.W."/>
            <person name="Kuenzler M."/>
        </authorList>
    </citation>
    <scope>ERRATUM OF PUBMED:33574430</scope>
</reference>
<evidence type="ECO:0000250" key="1">
    <source>
        <dbReference type="UniProtKB" id="A0A2R2JFI5"/>
    </source>
</evidence>
<evidence type="ECO:0000269" key="2">
    <source>
    </source>
</evidence>
<evidence type="ECO:0000269" key="3">
    <source>
    </source>
</evidence>
<evidence type="ECO:0000303" key="4">
    <source>
    </source>
</evidence>
<evidence type="ECO:0000303" key="5">
    <source>
    </source>
</evidence>
<evidence type="ECO:0000305" key="6"/>
<evidence type="ECO:0000305" key="7">
    <source>
    </source>
</evidence>
<proteinExistence type="evidence at protein level"/>
<organism>
    <name type="scientific">Lentinula edodes</name>
    <name type="common">Shiitake mushroom</name>
    <name type="synonym">Lentinus edodes</name>
    <dbReference type="NCBI Taxonomy" id="5353"/>
    <lineage>
        <taxon>Eukaryota</taxon>
        <taxon>Fungi</taxon>
        <taxon>Dikarya</taxon>
        <taxon>Basidiomycota</taxon>
        <taxon>Agaricomycotina</taxon>
        <taxon>Agaricomycetes</taxon>
        <taxon>Agaricomycetidae</taxon>
        <taxon>Agaricales</taxon>
        <taxon>Marasmiineae</taxon>
        <taxon>Omphalotaceae</taxon>
        <taxon>Lentinula</taxon>
    </lineage>
</organism>
<accession>A0A1Q3EPD6</accession>
<dbReference type="EC" id="2.1.1.-" evidence="2 3"/>
<dbReference type="EMBL" id="BDGU01000989">
    <property type="protein sequence ID" value="GAW09067.1"/>
    <property type="molecule type" value="Genomic_DNA"/>
</dbReference>
<dbReference type="SMR" id="A0A1Q3EPD6"/>
<dbReference type="STRING" id="5353.A0A1Q3EPD6"/>
<dbReference type="iPTMnet" id="A0A1Q3EPD6"/>
<dbReference type="OrthoDB" id="4623364at2759"/>
<dbReference type="Proteomes" id="UP000188533">
    <property type="component" value="Unassembled WGS sequence"/>
</dbReference>
<dbReference type="GO" id="GO:0008168">
    <property type="term" value="F:methyltransferase activity"/>
    <property type="evidence" value="ECO:0007669"/>
    <property type="project" value="UniProtKB-KW"/>
</dbReference>
<dbReference type="GO" id="GO:0032259">
    <property type="term" value="P:methylation"/>
    <property type="evidence" value="ECO:0007669"/>
    <property type="project" value="UniProtKB-KW"/>
</dbReference>
<dbReference type="CDD" id="cd19916">
    <property type="entry name" value="OphMA_like"/>
    <property type="match status" value="1"/>
</dbReference>
<dbReference type="Gene3D" id="3.40.1010.10">
    <property type="entry name" value="Cobalt-precorrin-4 Transmethylase, Domain 1"/>
    <property type="match status" value="1"/>
</dbReference>
<dbReference type="InterPro" id="IPR000878">
    <property type="entry name" value="4pyrrol_Mease"/>
</dbReference>
<dbReference type="InterPro" id="IPR035996">
    <property type="entry name" value="4pyrrol_Methylase_sf"/>
</dbReference>
<dbReference type="InterPro" id="IPR014777">
    <property type="entry name" value="4pyrrole_Mease_sub1"/>
</dbReference>
<dbReference type="NCBIfam" id="NF038374">
    <property type="entry name" value="omphalotin_tail"/>
    <property type="match status" value="1"/>
</dbReference>
<dbReference type="Pfam" id="PF00590">
    <property type="entry name" value="TP_methylase"/>
    <property type="match status" value="1"/>
</dbReference>
<dbReference type="SUPFAM" id="SSF53790">
    <property type="entry name" value="Tetrapyrrole methylase"/>
    <property type="match status" value="1"/>
</dbReference>